<evidence type="ECO:0000255" key="1">
    <source>
        <dbReference type="HAMAP-Rule" id="MF_01224"/>
    </source>
</evidence>
<reference key="1">
    <citation type="submission" date="2007-05" db="EMBL/GenBank/DDBJ databases">
        <title>Complete sequence of chromosome of Acidiphilium cryptum JF-5.</title>
        <authorList>
            <consortium name="US DOE Joint Genome Institute"/>
            <person name="Copeland A."/>
            <person name="Lucas S."/>
            <person name="Lapidus A."/>
            <person name="Barry K."/>
            <person name="Detter J.C."/>
            <person name="Glavina del Rio T."/>
            <person name="Hammon N."/>
            <person name="Israni S."/>
            <person name="Dalin E."/>
            <person name="Tice H."/>
            <person name="Pitluck S."/>
            <person name="Sims D."/>
            <person name="Brettin T."/>
            <person name="Bruce D."/>
            <person name="Han C."/>
            <person name="Schmutz J."/>
            <person name="Larimer F."/>
            <person name="Land M."/>
            <person name="Hauser L."/>
            <person name="Kyrpides N."/>
            <person name="Kim E."/>
            <person name="Magnuson T."/>
            <person name="Richardson P."/>
        </authorList>
    </citation>
    <scope>NUCLEOTIDE SEQUENCE [LARGE SCALE GENOMIC DNA]</scope>
    <source>
        <strain>JF-5</strain>
    </source>
</reference>
<dbReference type="EC" id="4.6.1.17" evidence="1"/>
<dbReference type="EMBL" id="CP000697">
    <property type="protein sequence ID" value="ABQ30442.1"/>
    <property type="molecule type" value="Genomic_DNA"/>
</dbReference>
<dbReference type="RefSeq" id="WP_007423144.1">
    <property type="nucleotide sequence ID" value="NC_009484.1"/>
</dbReference>
<dbReference type="SMR" id="A5FXW0"/>
<dbReference type="STRING" id="349163.Acry_1231"/>
<dbReference type="KEGG" id="acr:Acry_1231"/>
<dbReference type="eggNOG" id="COG0315">
    <property type="taxonomic scope" value="Bacteria"/>
</dbReference>
<dbReference type="HOGENOM" id="CLU_074693_1_1_5"/>
<dbReference type="UniPathway" id="UPA00344"/>
<dbReference type="Proteomes" id="UP000000245">
    <property type="component" value="Chromosome"/>
</dbReference>
<dbReference type="GO" id="GO:0061799">
    <property type="term" value="F:cyclic pyranopterin monophosphate synthase activity"/>
    <property type="evidence" value="ECO:0007669"/>
    <property type="project" value="UniProtKB-UniRule"/>
</dbReference>
<dbReference type="GO" id="GO:0006777">
    <property type="term" value="P:Mo-molybdopterin cofactor biosynthetic process"/>
    <property type="evidence" value="ECO:0007669"/>
    <property type="project" value="UniProtKB-UniRule"/>
</dbReference>
<dbReference type="CDD" id="cd01420">
    <property type="entry name" value="MoaC_PE"/>
    <property type="match status" value="1"/>
</dbReference>
<dbReference type="Gene3D" id="3.30.70.640">
    <property type="entry name" value="Molybdopterin cofactor biosynthesis C (MoaC) domain"/>
    <property type="match status" value="1"/>
</dbReference>
<dbReference type="HAMAP" id="MF_01224_B">
    <property type="entry name" value="MoaC_B"/>
    <property type="match status" value="1"/>
</dbReference>
<dbReference type="InterPro" id="IPR023045">
    <property type="entry name" value="MoaC"/>
</dbReference>
<dbReference type="InterPro" id="IPR047594">
    <property type="entry name" value="MoaC_bact/euk"/>
</dbReference>
<dbReference type="InterPro" id="IPR036522">
    <property type="entry name" value="MoaC_sf"/>
</dbReference>
<dbReference type="InterPro" id="IPR050105">
    <property type="entry name" value="MoCo_biosynth_MoaA/MoaC"/>
</dbReference>
<dbReference type="InterPro" id="IPR002820">
    <property type="entry name" value="Mopterin_CF_biosynth-C_dom"/>
</dbReference>
<dbReference type="NCBIfam" id="TIGR00581">
    <property type="entry name" value="moaC"/>
    <property type="match status" value="1"/>
</dbReference>
<dbReference type="NCBIfam" id="NF006870">
    <property type="entry name" value="PRK09364.1"/>
    <property type="match status" value="1"/>
</dbReference>
<dbReference type="PANTHER" id="PTHR22960:SF29">
    <property type="entry name" value="CYCLIC PYRANOPTERIN MONOPHOSPHATE SYNTHASE"/>
    <property type="match status" value="1"/>
</dbReference>
<dbReference type="PANTHER" id="PTHR22960">
    <property type="entry name" value="MOLYBDOPTERIN COFACTOR SYNTHESIS PROTEIN A"/>
    <property type="match status" value="1"/>
</dbReference>
<dbReference type="Pfam" id="PF01967">
    <property type="entry name" value="MoaC"/>
    <property type="match status" value="1"/>
</dbReference>
<dbReference type="SUPFAM" id="SSF55040">
    <property type="entry name" value="Molybdenum cofactor biosynthesis protein C, MoaC"/>
    <property type="match status" value="1"/>
</dbReference>
<organism>
    <name type="scientific">Acidiphilium cryptum (strain JF-5)</name>
    <dbReference type="NCBI Taxonomy" id="349163"/>
    <lineage>
        <taxon>Bacteria</taxon>
        <taxon>Pseudomonadati</taxon>
        <taxon>Pseudomonadota</taxon>
        <taxon>Alphaproteobacteria</taxon>
        <taxon>Acetobacterales</taxon>
        <taxon>Acidocellaceae</taxon>
        <taxon>Acidiphilium</taxon>
    </lineage>
</organism>
<comment type="function">
    <text evidence="1">Catalyzes the conversion of (8S)-3',8-cyclo-7,8-dihydroguanosine 5'-triphosphate to cyclic pyranopterin monophosphate (cPMP).</text>
</comment>
<comment type="catalytic activity">
    <reaction evidence="1">
        <text>(8S)-3',8-cyclo-7,8-dihydroguanosine 5'-triphosphate = cyclic pyranopterin phosphate + diphosphate</text>
        <dbReference type="Rhea" id="RHEA:49580"/>
        <dbReference type="ChEBI" id="CHEBI:33019"/>
        <dbReference type="ChEBI" id="CHEBI:59648"/>
        <dbReference type="ChEBI" id="CHEBI:131766"/>
        <dbReference type="EC" id="4.6.1.17"/>
    </reaction>
</comment>
<comment type="pathway">
    <text evidence="1">Cofactor biosynthesis; molybdopterin biosynthesis.</text>
</comment>
<comment type="subunit">
    <text evidence="1">Homohexamer; trimer of dimers.</text>
</comment>
<comment type="similarity">
    <text evidence="1">Belongs to the MoaC family.</text>
</comment>
<keyword id="KW-0456">Lyase</keyword>
<keyword id="KW-0501">Molybdenum cofactor biosynthesis</keyword>
<keyword id="KW-1185">Reference proteome</keyword>
<sequence length="158" mass="16597">MSRLTHIDERGAARMVDVSGKAETAREATAACHVTMRAETLALVTEGTAKKGDVLATARIAGIMAAKRTSELIPLCHPLAIAGVTLELEPDAALPGIRIAATVKTTGPTGVEMEALTAASVAALTVYDMLKAAEREMRIEGLRVIRKSGGKSGDFRQE</sequence>
<accession>A5FXW0</accession>
<proteinExistence type="inferred from homology"/>
<name>MOAC_ACICJ</name>
<protein>
    <recommendedName>
        <fullName evidence="1">Cyclic pyranopterin monophosphate synthase</fullName>
        <ecNumber evidence="1">4.6.1.17</ecNumber>
    </recommendedName>
    <alternativeName>
        <fullName evidence="1">Molybdenum cofactor biosynthesis protein C</fullName>
    </alternativeName>
</protein>
<feature type="chain" id="PRO_1000054060" description="Cyclic pyranopterin monophosphate synthase">
    <location>
        <begin position="1"/>
        <end position="158"/>
    </location>
</feature>
<feature type="active site" evidence="1">
    <location>
        <position position="128"/>
    </location>
</feature>
<feature type="binding site" evidence="1">
    <location>
        <begin position="75"/>
        <end position="77"/>
    </location>
    <ligand>
        <name>substrate</name>
    </ligand>
</feature>
<feature type="binding site" evidence="1">
    <location>
        <begin position="113"/>
        <end position="114"/>
    </location>
    <ligand>
        <name>substrate</name>
    </ligand>
</feature>
<gene>
    <name evidence="1" type="primary">moaC</name>
    <name type="ordered locus">Acry_1231</name>
</gene>